<accession>O33040</accession>
<keyword id="KW-0378">Hydrolase</keyword>
<keyword id="KW-1185">Reference proteome</keyword>
<gene>
    <name type="primary">amiC</name>
    <name type="ordered locus">ML1596</name>
    <name type="ORF">MLCB250.65</name>
</gene>
<evidence type="ECO:0000250" key="1"/>
<evidence type="ECO:0000305" key="2"/>
<feature type="chain" id="PRO_0000105257" description="Putative amidase AmiC">
    <location>
        <begin position="1"/>
        <end position="468"/>
    </location>
</feature>
<feature type="active site" description="Charge relay system" evidence="1">
    <location>
        <position position="80"/>
    </location>
</feature>
<feature type="active site" description="Charge relay system" evidence="1">
    <location>
        <position position="155"/>
    </location>
</feature>
<feature type="active site" description="Acyl-ester intermediate" evidence="1">
    <location>
        <position position="179"/>
    </location>
</feature>
<protein>
    <recommendedName>
        <fullName>Putative amidase AmiC</fullName>
        <ecNumber>3.5.1.4</ecNumber>
    </recommendedName>
</protein>
<proteinExistence type="inferred from homology"/>
<organism>
    <name type="scientific">Mycobacterium leprae (strain TN)</name>
    <dbReference type="NCBI Taxonomy" id="272631"/>
    <lineage>
        <taxon>Bacteria</taxon>
        <taxon>Bacillati</taxon>
        <taxon>Actinomycetota</taxon>
        <taxon>Actinomycetes</taxon>
        <taxon>Mycobacteriales</taxon>
        <taxon>Mycobacteriaceae</taxon>
        <taxon>Mycobacterium</taxon>
    </lineage>
</organism>
<sequence length="468" mass="51164">MQRVHAFGDDALGDLDAVGLADAIRAGWVSRADVIEAAIVRTEAVNPALGGLAYEAFQWARQTASKAGSGFFSGVPTFIKDNIDVAGQPTMRGSDAWVPRNAFDDGEFTRLYLATGPVSLGKTQLSEFGFSASAEHMRLGPVRNPWDTDYTAGASSSGSGAFVAAGVVPMAHANDGGGSIRIPASCNGLVGLKPSRGRLPLDSELRRLPVGIVVNGVLTRSVRDTAAFYREAERIWHNPKLPPVGDVTQPGRQRLRIAVVTRSVQRECSPELRELTLKSARLLEELGHRVERVAEPPVPPNFPDDFLLYWGLLAAMQVRTGRLAFGNTFDRTKLDSLTLGLDRHASRNMHRLPKAIMRLRRLRRRTADFFATYDVLLTPTVADETPRIGYLTPTDYQQVMDRLMGWVAFTPLQNVTGEPAISLPLAQSADGMPVGMMFTADFGQEAQLLELAFELEEARPWARIQIGD</sequence>
<dbReference type="EC" id="3.5.1.4"/>
<dbReference type="EMBL" id="Z97369">
    <property type="protein sequence ID" value="CAB10659.1"/>
    <property type="molecule type" value="Genomic_DNA"/>
</dbReference>
<dbReference type="EMBL" id="AL583922">
    <property type="protein sequence ID" value="CAC30547.1"/>
    <property type="molecule type" value="Genomic_DNA"/>
</dbReference>
<dbReference type="PIR" id="F87108">
    <property type="entry name" value="F87108"/>
</dbReference>
<dbReference type="RefSeq" id="NP_302099.1">
    <property type="nucleotide sequence ID" value="NC_002677.1"/>
</dbReference>
<dbReference type="RefSeq" id="WP_010908420.1">
    <property type="nucleotide sequence ID" value="NC_002677.1"/>
</dbReference>
<dbReference type="SMR" id="O33040"/>
<dbReference type="STRING" id="272631.gene:17575437"/>
<dbReference type="KEGG" id="mle:ML1596"/>
<dbReference type="PATRIC" id="fig|272631.5.peg.3009"/>
<dbReference type="Leproma" id="ML1596"/>
<dbReference type="eggNOG" id="COG0154">
    <property type="taxonomic scope" value="Bacteria"/>
</dbReference>
<dbReference type="HOGENOM" id="CLU_009600_0_4_11"/>
<dbReference type="OrthoDB" id="5175573at2"/>
<dbReference type="Proteomes" id="UP000000806">
    <property type="component" value="Chromosome"/>
</dbReference>
<dbReference type="GO" id="GO:0004040">
    <property type="term" value="F:amidase activity"/>
    <property type="evidence" value="ECO:0007669"/>
    <property type="project" value="UniProtKB-EC"/>
</dbReference>
<dbReference type="Gene3D" id="3.90.1300.10">
    <property type="entry name" value="Amidase signature (AS) domain"/>
    <property type="match status" value="1"/>
</dbReference>
<dbReference type="InterPro" id="IPR000120">
    <property type="entry name" value="Amidase"/>
</dbReference>
<dbReference type="InterPro" id="IPR020556">
    <property type="entry name" value="Amidase_CS"/>
</dbReference>
<dbReference type="InterPro" id="IPR023631">
    <property type="entry name" value="Amidase_dom"/>
</dbReference>
<dbReference type="InterPro" id="IPR036928">
    <property type="entry name" value="AS_sf"/>
</dbReference>
<dbReference type="NCBIfam" id="NF005899">
    <property type="entry name" value="PRK07869.1"/>
    <property type="match status" value="1"/>
</dbReference>
<dbReference type="PANTHER" id="PTHR11895:SF7">
    <property type="entry name" value="GLUTAMYL-TRNA(GLN) AMIDOTRANSFERASE SUBUNIT A, MITOCHONDRIAL"/>
    <property type="match status" value="1"/>
</dbReference>
<dbReference type="PANTHER" id="PTHR11895">
    <property type="entry name" value="TRANSAMIDASE"/>
    <property type="match status" value="1"/>
</dbReference>
<dbReference type="Pfam" id="PF01425">
    <property type="entry name" value="Amidase"/>
    <property type="match status" value="1"/>
</dbReference>
<dbReference type="SUPFAM" id="SSF75304">
    <property type="entry name" value="Amidase signature (AS) enzymes"/>
    <property type="match status" value="1"/>
</dbReference>
<dbReference type="PROSITE" id="PS00571">
    <property type="entry name" value="AMIDASES"/>
    <property type="match status" value="1"/>
</dbReference>
<reference key="1">
    <citation type="journal article" date="2001" name="Nature">
        <title>Massive gene decay in the leprosy bacillus.</title>
        <authorList>
            <person name="Cole S.T."/>
            <person name="Eiglmeier K."/>
            <person name="Parkhill J."/>
            <person name="James K.D."/>
            <person name="Thomson N.R."/>
            <person name="Wheeler P.R."/>
            <person name="Honore N."/>
            <person name="Garnier T."/>
            <person name="Churcher C.M."/>
            <person name="Harris D.E."/>
            <person name="Mungall K.L."/>
            <person name="Basham D."/>
            <person name="Brown D."/>
            <person name="Chillingworth T."/>
            <person name="Connor R."/>
            <person name="Davies R.M."/>
            <person name="Devlin K."/>
            <person name="Duthoy S."/>
            <person name="Feltwell T."/>
            <person name="Fraser A."/>
            <person name="Hamlin N."/>
            <person name="Holroyd S."/>
            <person name="Hornsby T."/>
            <person name="Jagels K."/>
            <person name="Lacroix C."/>
            <person name="Maclean J."/>
            <person name="Moule S."/>
            <person name="Murphy L.D."/>
            <person name="Oliver K."/>
            <person name="Quail M.A."/>
            <person name="Rajandream M.A."/>
            <person name="Rutherford K.M."/>
            <person name="Rutter S."/>
            <person name="Seeger K."/>
            <person name="Simon S."/>
            <person name="Simmonds M."/>
            <person name="Skelton J."/>
            <person name="Squares R."/>
            <person name="Squares S."/>
            <person name="Stevens K."/>
            <person name="Taylor K."/>
            <person name="Whitehead S."/>
            <person name="Woodward J.R."/>
            <person name="Barrell B.G."/>
        </authorList>
    </citation>
    <scope>NUCLEOTIDE SEQUENCE [LARGE SCALE GENOMIC DNA]</scope>
    <source>
        <strain>TN</strain>
    </source>
</reference>
<comment type="catalytic activity">
    <reaction>
        <text>a monocarboxylic acid amide + H2O = a monocarboxylate + NH4(+)</text>
        <dbReference type="Rhea" id="RHEA:12020"/>
        <dbReference type="ChEBI" id="CHEBI:15377"/>
        <dbReference type="ChEBI" id="CHEBI:28938"/>
        <dbReference type="ChEBI" id="CHEBI:35757"/>
        <dbReference type="ChEBI" id="CHEBI:83628"/>
        <dbReference type="EC" id="3.5.1.4"/>
    </reaction>
</comment>
<comment type="similarity">
    <text evidence="2">Belongs to the amidase family.</text>
</comment>
<name>AMI3_MYCLE</name>